<accession>Q58HT5</accession>
<accession>Q5JT21</accession>
<accession>Q6IEE4</accession>
<reference key="1">
    <citation type="journal article" date="2005" name="J. Biol. Chem.">
        <title>Identification of two novel human Acyl-CoA wax alcohol acyltransferases: members of the diacylglycerol acyltransferase 2 (DGAT2) gene superfamily.</title>
        <authorList>
            <person name="Turkish A.R."/>
            <person name="Henneberry A.L."/>
            <person name="Cromley D."/>
            <person name="Padamsee M."/>
            <person name="Oelkers P."/>
            <person name="Bazzi H."/>
            <person name="Christiano A.M."/>
            <person name="Billheimer J.T."/>
            <person name="Sturley S.L."/>
        </authorList>
    </citation>
    <scope>NUCLEOTIDE SEQUENCE [MRNA]</scope>
    <scope>FUNCTION</scope>
    <scope>CATALYTIC ACTIVITY</scope>
    <scope>TISSUE SPECIFICITY</scope>
</reference>
<reference key="2">
    <citation type="journal article" date="2005" name="Nature">
        <title>The DNA sequence of the human X chromosome.</title>
        <authorList>
            <person name="Ross M.T."/>
            <person name="Grafham D.V."/>
            <person name="Coffey A.J."/>
            <person name="Scherer S."/>
            <person name="McLay K."/>
            <person name="Muzny D."/>
            <person name="Platzer M."/>
            <person name="Howell G.R."/>
            <person name="Burrows C."/>
            <person name="Bird C.P."/>
            <person name="Frankish A."/>
            <person name="Lovell F.L."/>
            <person name="Howe K.L."/>
            <person name="Ashurst J.L."/>
            <person name="Fulton R.S."/>
            <person name="Sudbrak R."/>
            <person name="Wen G."/>
            <person name="Jones M.C."/>
            <person name="Hurles M.E."/>
            <person name="Andrews T.D."/>
            <person name="Scott C.E."/>
            <person name="Searle S."/>
            <person name="Ramser J."/>
            <person name="Whittaker A."/>
            <person name="Deadman R."/>
            <person name="Carter N.P."/>
            <person name="Hunt S.E."/>
            <person name="Chen R."/>
            <person name="Cree A."/>
            <person name="Gunaratne P."/>
            <person name="Havlak P."/>
            <person name="Hodgson A."/>
            <person name="Metzker M.L."/>
            <person name="Richards S."/>
            <person name="Scott G."/>
            <person name="Steffen D."/>
            <person name="Sodergren E."/>
            <person name="Wheeler D.A."/>
            <person name="Worley K.C."/>
            <person name="Ainscough R."/>
            <person name="Ambrose K.D."/>
            <person name="Ansari-Lari M.A."/>
            <person name="Aradhya S."/>
            <person name="Ashwell R.I."/>
            <person name="Babbage A.K."/>
            <person name="Bagguley C.L."/>
            <person name="Ballabio A."/>
            <person name="Banerjee R."/>
            <person name="Barker G.E."/>
            <person name="Barlow K.F."/>
            <person name="Barrett I.P."/>
            <person name="Bates K.N."/>
            <person name="Beare D.M."/>
            <person name="Beasley H."/>
            <person name="Beasley O."/>
            <person name="Beck A."/>
            <person name="Bethel G."/>
            <person name="Blechschmidt K."/>
            <person name="Brady N."/>
            <person name="Bray-Allen S."/>
            <person name="Bridgeman A.M."/>
            <person name="Brown A.J."/>
            <person name="Brown M.J."/>
            <person name="Bonnin D."/>
            <person name="Bruford E.A."/>
            <person name="Buhay C."/>
            <person name="Burch P."/>
            <person name="Burford D."/>
            <person name="Burgess J."/>
            <person name="Burrill W."/>
            <person name="Burton J."/>
            <person name="Bye J.M."/>
            <person name="Carder C."/>
            <person name="Carrel L."/>
            <person name="Chako J."/>
            <person name="Chapman J.C."/>
            <person name="Chavez D."/>
            <person name="Chen E."/>
            <person name="Chen G."/>
            <person name="Chen Y."/>
            <person name="Chen Z."/>
            <person name="Chinault C."/>
            <person name="Ciccodicola A."/>
            <person name="Clark S.Y."/>
            <person name="Clarke G."/>
            <person name="Clee C.M."/>
            <person name="Clegg S."/>
            <person name="Clerc-Blankenburg K."/>
            <person name="Clifford K."/>
            <person name="Cobley V."/>
            <person name="Cole C.G."/>
            <person name="Conquer J.S."/>
            <person name="Corby N."/>
            <person name="Connor R.E."/>
            <person name="David R."/>
            <person name="Davies J."/>
            <person name="Davis C."/>
            <person name="Davis J."/>
            <person name="Delgado O."/>
            <person name="Deshazo D."/>
            <person name="Dhami P."/>
            <person name="Ding Y."/>
            <person name="Dinh H."/>
            <person name="Dodsworth S."/>
            <person name="Draper H."/>
            <person name="Dugan-Rocha S."/>
            <person name="Dunham A."/>
            <person name="Dunn M."/>
            <person name="Durbin K.J."/>
            <person name="Dutta I."/>
            <person name="Eades T."/>
            <person name="Ellwood M."/>
            <person name="Emery-Cohen A."/>
            <person name="Errington H."/>
            <person name="Evans K.L."/>
            <person name="Faulkner L."/>
            <person name="Francis F."/>
            <person name="Frankland J."/>
            <person name="Fraser A.E."/>
            <person name="Galgoczy P."/>
            <person name="Gilbert J."/>
            <person name="Gill R."/>
            <person name="Gloeckner G."/>
            <person name="Gregory S.G."/>
            <person name="Gribble S."/>
            <person name="Griffiths C."/>
            <person name="Grocock R."/>
            <person name="Gu Y."/>
            <person name="Gwilliam R."/>
            <person name="Hamilton C."/>
            <person name="Hart E.A."/>
            <person name="Hawes A."/>
            <person name="Heath P.D."/>
            <person name="Heitmann K."/>
            <person name="Hennig S."/>
            <person name="Hernandez J."/>
            <person name="Hinzmann B."/>
            <person name="Ho S."/>
            <person name="Hoffs M."/>
            <person name="Howden P.J."/>
            <person name="Huckle E.J."/>
            <person name="Hume J."/>
            <person name="Hunt P.J."/>
            <person name="Hunt A.R."/>
            <person name="Isherwood J."/>
            <person name="Jacob L."/>
            <person name="Johnson D."/>
            <person name="Jones S."/>
            <person name="de Jong P.J."/>
            <person name="Joseph S.S."/>
            <person name="Keenan S."/>
            <person name="Kelly S."/>
            <person name="Kershaw J.K."/>
            <person name="Khan Z."/>
            <person name="Kioschis P."/>
            <person name="Klages S."/>
            <person name="Knights A.J."/>
            <person name="Kosiura A."/>
            <person name="Kovar-Smith C."/>
            <person name="Laird G.K."/>
            <person name="Langford C."/>
            <person name="Lawlor S."/>
            <person name="Leversha M."/>
            <person name="Lewis L."/>
            <person name="Liu W."/>
            <person name="Lloyd C."/>
            <person name="Lloyd D.M."/>
            <person name="Loulseged H."/>
            <person name="Loveland J.E."/>
            <person name="Lovell J.D."/>
            <person name="Lozado R."/>
            <person name="Lu J."/>
            <person name="Lyne R."/>
            <person name="Ma J."/>
            <person name="Maheshwari M."/>
            <person name="Matthews L.H."/>
            <person name="McDowall J."/>
            <person name="McLaren S."/>
            <person name="McMurray A."/>
            <person name="Meidl P."/>
            <person name="Meitinger T."/>
            <person name="Milne S."/>
            <person name="Miner G."/>
            <person name="Mistry S.L."/>
            <person name="Morgan M."/>
            <person name="Morris S."/>
            <person name="Mueller I."/>
            <person name="Mullikin J.C."/>
            <person name="Nguyen N."/>
            <person name="Nordsiek G."/>
            <person name="Nyakatura G."/>
            <person name="O'dell C.N."/>
            <person name="Okwuonu G."/>
            <person name="Palmer S."/>
            <person name="Pandian R."/>
            <person name="Parker D."/>
            <person name="Parrish J."/>
            <person name="Pasternak S."/>
            <person name="Patel D."/>
            <person name="Pearce A.V."/>
            <person name="Pearson D.M."/>
            <person name="Pelan S.E."/>
            <person name="Perez L."/>
            <person name="Porter K.M."/>
            <person name="Ramsey Y."/>
            <person name="Reichwald K."/>
            <person name="Rhodes S."/>
            <person name="Ridler K.A."/>
            <person name="Schlessinger D."/>
            <person name="Schueler M.G."/>
            <person name="Sehra H.K."/>
            <person name="Shaw-Smith C."/>
            <person name="Shen H."/>
            <person name="Sheridan E.M."/>
            <person name="Shownkeen R."/>
            <person name="Skuce C.D."/>
            <person name="Smith M.L."/>
            <person name="Sotheran E.C."/>
            <person name="Steingruber H.E."/>
            <person name="Steward C.A."/>
            <person name="Storey R."/>
            <person name="Swann R.M."/>
            <person name="Swarbreck D."/>
            <person name="Tabor P.E."/>
            <person name="Taudien S."/>
            <person name="Taylor T."/>
            <person name="Teague B."/>
            <person name="Thomas K."/>
            <person name="Thorpe A."/>
            <person name="Timms K."/>
            <person name="Tracey A."/>
            <person name="Trevanion S."/>
            <person name="Tromans A.C."/>
            <person name="d'Urso M."/>
            <person name="Verduzco D."/>
            <person name="Villasana D."/>
            <person name="Waldron L."/>
            <person name="Wall M."/>
            <person name="Wang Q."/>
            <person name="Warren J."/>
            <person name="Warry G.L."/>
            <person name="Wei X."/>
            <person name="West A."/>
            <person name="Whitehead S.L."/>
            <person name="Whiteley M.N."/>
            <person name="Wilkinson J.E."/>
            <person name="Willey D.L."/>
            <person name="Williams G."/>
            <person name="Williams L."/>
            <person name="Williamson A."/>
            <person name="Williamson H."/>
            <person name="Wilming L."/>
            <person name="Woodmansey R.L."/>
            <person name="Wray P.W."/>
            <person name="Yen J."/>
            <person name="Zhang J."/>
            <person name="Zhou J."/>
            <person name="Zoghbi H."/>
            <person name="Zorilla S."/>
            <person name="Buck D."/>
            <person name="Reinhardt R."/>
            <person name="Poustka A."/>
            <person name="Rosenthal A."/>
            <person name="Lehrach H."/>
            <person name="Meindl A."/>
            <person name="Minx P.J."/>
            <person name="Hillier L.W."/>
            <person name="Willard H.F."/>
            <person name="Wilson R.K."/>
            <person name="Waterston R.H."/>
            <person name="Rice C.M."/>
            <person name="Vaudin M."/>
            <person name="Coulson A."/>
            <person name="Nelson D.L."/>
            <person name="Weinstock G."/>
            <person name="Sulston J.E."/>
            <person name="Durbin R.M."/>
            <person name="Hubbard T."/>
            <person name="Gibbs R.A."/>
            <person name="Beck S."/>
            <person name="Rogers J."/>
            <person name="Bentley D.R."/>
        </authorList>
    </citation>
    <scope>NUCLEOTIDE SEQUENCE [LARGE SCALE GENOMIC DNA]</scope>
</reference>
<reference key="3">
    <citation type="journal article" date="2004" name="Genome Res.">
        <title>The status, quality, and expansion of the NIH full-length cDNA project: the Mammalian Gene Collection (MGC).</title>
        <authorList>
            <consortium name="The MGC Project Team"/>
        </authorList>
    </citation>
    <scope>NUCLEOTIDE SEQUENCE [LARGE SCALE MRNA] OF 87-328</scope>
    <source>
        <tissue>Skin</tissue>
    </source>
</reference>
<reference key="4">
    <citation type="journal article" date="2003" name="Cytogenet. Genome Res.">
        <title>Genomic organization of the DGAT2/MOGAT gene family in cattle (Bos taurus) and other mammals.</title>
        <authorList>
            <person name="Winter A."/>
            <person name="van Eckeveld M."/>
            <person name="Bininda-Emonds O.R.P."/>
            <person name="Habermann F.A."/>
            <person name="Fries R."/>
        </authorList>
    </citation>
    <scope>IDENTIFICATION</scope>
</reference>
<comment type="function">
    <text evidence="3">Acyltransferase that catalyzes the formation of ester bonds between fatty alcohols and fatty acyl-CoAs to form wax monoesters (PubMed:15671038). Shows a strong preference for decyl alcohol (C10), with less activity towards C16 and C18 alcohols (PubMed:15671038). Shows a strong preference for saturated acyl-CoAs (PubMed:15671038).</text>
</comment>
<comment type="catalytic activity">
    <reaction evidence="3">
        <text>a long chain fatty alcohol + a fatty acyl-CoA = a wax ester + CoA</text>
        <dbReference type="Rhea" id="RHEA:38443"/>
        <dbReference type="ChEBI" id="CHEBI:10036"/>
        <dbReference type="ChEBI" id="CHEBI:17135"/>
        <dbReference type="ChEBI" id="CHEBI:57287"/>
        <dbReference type="ChEBI" id="CHEBI:77636"/>
        <dbReference type="EC" id="2.3.1.75"/>
    </reaction>
    <physiologicalReaction direction="left-to-right" evidence="5">
        <dbReference type="Rhea" id="RHEA:38444"/>
    </physiologicalReaction>
</comment>
<comment type="catalytic activity">
    <reaction evidence="3">
        <text>1,2-di-(9Z-octadecenoyl)-sn-glycerol + (9Z)-octadecenoyl-CoA = 1,2,3-tri-(9Z-octadecenoyl)-glycerol + CoA</text>
        <dbReference type="Rhea" id="RHEA:38219"/>
        <dbReference type="ChEBI" id="CHEBI:52333"/>
        <dbReference type="ChEBI" id="CHEBI:53753"/>
        <dbReference type="ChEBI" id="CHEBI:57287"/>
        <dbReference type="ChEBI" id="CHEBI:57387"/>
    </reaction>
    <physiologicalReaction direction="left-to-right" evidence="5">
        <dbReference type="Rhea" id="RHEA:38220"/>
    </physiologicalReaction>
</comment>
<comment type="catalytic activity">
    <reaction evidence="3">
        <text>hexadecan-1-ol + (9Z)-octadecenoyl-CoA = hexadecanyl (9Z)-octadecenoate + CoA</text>
        <dbReference type="Rhea" id="RHEA:38227"/>
        <dbReference type="ChEBI" id="CHEBI:16125"/>
        <dbReference type="ChEBI" id="CHEBI:57287"/>
        <dbReference type="ChEBI" id="CHEBI:57387"/>
        <dbReference type="ChEBI" id="CHEBI:75622"/>
    </reaction>
    <physiologicalReaction direction="left-to-right" evidence="5">
        <dbReference type="Rhea" id="RHEA:38228"/>
    </physiologicalReaction>
</comment>
<comment type="catalytic activity">
    <reaction evidence="3">
        <text>decan-1-ol + (9Z)-octadecenoyl-CoA = 1-O-decyl-(9Z)-octadecenoate + CoA</text>
        <dbReference type="Rhea" id="RHEA:38223"/>
        <dbReference type="ChEBI" id="CHEBI:28903"/>
        <dbReference type="ChEBI" id="CHEBI:57287"/>
        <dbReference type="ChEBI" id="CHEBI:57387"/>
        <dbReference type="ChEBI" id="CHEBI:75620"/>
    </reaction>
    <physiologicalReaction direction="left-to-right" evidence="5">
        <dbReference type="Rhea" id="RHEA:38224"/>
    </physiologicalReaction>
</comment>
<comment type="catalytic activity">
    <reaction evidence="3">
        <text>(9Z)-hexadecen-1-ol + (9Z)-octadecenoyl-CoA = 1-O-(9Z)-hexadecenyl (9Z)-octadecenoate + CoA</text>
        <dbReference type="Rhea" id="RHEA:38231"/>
        <dbReference type="ChEBI" id="CHEBI:57287"/>
        <dbReference type="ChEBI" id="CHEBI:57387"/>
        <dbReference type="ChEBI" id="CHEBI:75623"/>
        <dbReference type="ChEBI" id="CHEBI:75624"/>
    </reaction>
    <physiologicalReaction direction="left-to-right" evidence="5">
        <dbReference type="Rhea" id="RHEA:38232"/>
    </physiologicalReaction>
</comment>
<comment type="catalytic activity">
    <reaction evidence="3">
        <text>octadecan-1-ol + (9Z)-octadecenoyl-CoA = 1-O-octadecyl (9Z)-octadecenoate + CoA</text>
        <dbReference type="Rhea" id="RHEA:38235"/>
        <dbReference type="ChEBI" id="CHEBI:32154"/>
        <dbReference type="ChEBI" id="CHEBI:57287"/>
        <dbReference type="ChEBI" id="CHEBI:57387"/>
        <dbReference type="ChEBI" id="CHEBI:75625"/>
    </reaction>
    <physiologicalReaction direction="left-to-right" evidence="5">
        <dbReference type="Rhea" id="RHEA:38236"/>
    </physiologicalReaction>
</comment>
<comment type="catalytic activity">
    <reaction evidence="3">
        <text>(9Z)-octadecen-1-ol + (9Z)-octadecenoyl-CoA = 1-O-(9Z)-octadecenyl (9Z)-octadecenoate + CoA</text>
        <dbReference type="Rhea" id="RHEA:38239"/>
        <dbReference type="ChEBI" id="CHEBI:57287"/>
        <dbReference type="ChEBI" id="CHEBI:57387"/>
        <dbReference type="ChEBI" id="CHEBI:73504"/>
        <dbReference type="ChEBI" id="CHEBI:75626"/>
    </reaction>
    <physiologicalReaction direction="left-to-right" evidence="5">
        <dbReference type="Rhea" id="RHEA:38240"/>
    </physiologicalReaction>
</comment>
<comment type="catalytic activity">
    <reaction evidence="3">
        <text>hexadecan-1-ol + hexadecanoyl-CoA = hexadecanyl hexadecanoate + CoA</text>
        <dbReference type="Rhea" id="RHEA:38167"/>
        <dbReference type="ChEBI" id="CHEBI:16125"/>
        <dbReference type="ChEBI" id="CHEBI:57287"/>
        <dbReference type="ChEBI" id="CHEBI:57379"/>
        <dbReference type="ChEBI" id="CHEBI:75584"/>
    </reaction>
    <physiologicalReaction direction="left-to-right" evidence="5">
        <dbReference type="Rhea" id="RHEA:38168"/>
    </physiologicalReaction>
</comment>
<comment type="catalytic activity">
    <reaction evidence="3">
        <text>hexadecan-1-ol + (9Z)-hexadecenoyl-CoA = 1-O-hexadecyl (9Z)-hexadecenoate + CoA</text>
        <dbReference type="Rhea" id="RHEA:38247"/>
        <dbReference type="ChEBI" id="CHEBI:16125"/>
        <dbReference type="ChEBI" id="CHEBI:57287"/>
        <dbReference type="ChEBI" id="CHEBI:61540"/>
        <dbReference type="ChEBI" id="CHEBI:75629"/>
    </reaction>
    <physiologicalReaction direction="left-to-right" evidence="5">
        <dbReference type="Rhea" id="RHEA:38248"/>
    </physiologicalReaction>
</comment>
<comment type="catalytic activity">
    <reaction evidence="3">
        <text>hexadecan-1-ol + octadecanoyl-CoA = hexadecanyl octadecanoate + CoA</text>
        <dbReference type="Rhea" id="RHEA:38251"/>
        <dbReference type="ChEBI" id="CHEBI:16125"/>
        <dbReference type="ChEBI" id="CHEBI:57287"/>
        <dbReference type="ChEBI" id="CHEBI:57394"/>
        <dbReference type="ChEBI" id="CHEBI:75631"/>
    </reaction>
    <physiologicalReaction direction="left-to-right" evidence="5">
        <dbReference type="Rhea" id="RHEA:38252"/>
    </physiologicalReaction>
</comment>
<comment type="catalytic activity">
    <reaction evidence="3">
        <text>eicosan-1-ol + (9Z)-octadecenoyl-CoA = 1-O-eicosanyl (9Z)-octadecenoate + CoA</text>
        <dbReference type="Rhea" id="RHEA:38243"/>
        <dbReference type="ChEBI" id="CHEBI:57287"/>
        <dbReference type="ChEBI" id="CHEBI:57387"/>
        <dbReference type="ChEBI" id="CHEBI:75627"/>
        <dbReference type="ChEBI" id="CHEBI:75628"/>
    </reaction>
    <physiologicalReaction direction="left-to-right" evidence="5">
        <dbReference type="Rhea" id="RHEA:38244"/>
    </physiologicalReaction>
</comment>
<comment type="subcellular location">
    <subcellularLocation>
        <location evidence="1">Endoplasmic reticulum membrane</location>
        <topology evidence="2">Multi-pass membrane protein</topology>
    </subcellularLocation>
</comment>
<comment type="tissue specificity">
    <text evidence="3">Predominantly expressed in skin, where it is limited to the sebaceous gland. Expressed in more mature, centrally located cells just before their rupture and sebum release. Also expressed in all tissues except spleen. Expressed at higher level in thymus, prostate and testis.</text>
</comment>
<comment type="similarity">
    <text evidence="4">Belongs to the diacylglycerol acyltransferase family.</text>
</comment>
<feature type="chain" id="PRO_0000249051" description="Acyl-CoA wax alcohol acyltransferase 1">
    <location>
        <begin position="1"/>
        <end position="328"/>
    </location>
</feature>
<feature type="transmembrane region" description="Helical" evidence="2">
    <location>
        <begin position="12"/>
        <end position="32"/>
    </location>
</feature>
<feature type="transmembrane region" description="Helical" evidence="2">
    <location>
        <begin position="34"/>
        <end position="53"/>
    </location>
</feature>
<protein>
    <recommendedName>
        <fullName>Acyl-CoA wax alcohol acyltransferase 1</fullName>
        <ecNumber evidence="3">2.3.1.75</ecNumber>
    </recommendedName>
    <alternativeName>
        <fullName>Diacylglycerol O-acyltransferase 2-like protein 3</fullName>
    </alternativeName>
    <alternativeName>
        <fullName>Diacylglycerol acyltransferase 2</fullName>
    </alternativeName>
    <alternativeName>
        <fullName>Long-chain-alcohol O-fatty-acyltransferase 1</fullName>
    </alternativeName>
</protein>
<evidence type="ECO:0000250" key="1">
    <source>
        <dbReference type="UniProtKB" id="Q6E213"/>
    </source>
</evidence>
<evidence type="ECO:0000255" key="2"/>
<evidence type="ECO:0000269" key="3">
    <source>
    </source>
</evidence>
<evidence type="ECO:0000305" key="4"/>
<evidence type="ECO:0000305" key="5">
    <source>
    </source>
</evidence>
<keyword id="KW-0012">Acyltransferase</keyword>
<keyword id="KW-0256">Endoplasmic reticulum</keyword>
<keyword id="KW-0444">Lipid biosynthesis</keyword>
<keyword id="KW-0443">Lipid metabolism</keyword>
<keyword id="KW-0472">Membrane</keyword>
<keyword id="KW-1185">Reference proteome</keyword>
<keyword id="KW-0808">Transferase</keyword>
<keyword id="KW-0812">Transmembrane</keyword>
<keyword id="KW-1133">Transmembrane helix</keyword>
<name>AWAT1_HUMAN</name>
<sequence length="328" mass="37759">MAHSKQPSHFQSLMLLQWPLSYLAIFWILQPLFVYLLFTSLWPLPVLYFAWLFLDWKTPERGGRRSAWVRNWCVWTHIRDYFPITILKTKDLSPEHNYLMGVHPHGLLTFGAFCNFCTEATGFSKTFPGITPHLATLSWFFKIPFVREYLMAKGVCSVSQPAINYLLSHGTGNLVGIVVGGVGEALQSVPNTTTLILQKRKGFVRTALQHGAHLVPTFTFGETEVYDQVLFHKDSRMYKFQSCFRRIFGFYCCVFYGQSFCQGSTGLLPYSRPIVTVVGEPLPLPQIEKPSQEMVDKYHALYMDALHKLFDQHKTHYGCSETQKLFFL</sequence>
<gene>
    <name type="primary">AWAT1</name>
    <name type="synonym">DGA2</name>
    <name type="synonym">DGAT2L3</name>
</gene>
<organism>
    <name type="scientific">Homo sapiens</name>
    <name type="common">Human</name>
    <dbReference type="NCBI Taxonomy" id="9606"/>
    <lineage>
        <taxon>Eukaryota</taxon>
        <taxon>Metazoa</taxon>
        <taxon>Chordata</taxon>
        <taxon>Craniata</taxon>
        <taxon>Vertebrata</taxon>
        <taxon>Euteleostomi</taxon>
        <taxon>Mammalia</taxon>
        <taxon>Eutheria</taxon>
        <taxon>Euarchontoglires</taxon>
        <taxon>Primates</taxon>
        <taxon>Haplorrhini</taxon>
        <taxon>Catarrhini</taxon>
        <taxon>Hominidae</taxon>
        <taxon>Homo</taxon>
    </lineage>
</organism>
<dbReference type="EC" id="2.3.1.75" evidence="3"/>
<dbReference type="EMBL" id="AY947638">
    <property type="protein sequence ID" value="AAX48018.1"/>
    <property type="molecule type" value="mRNA"/>
</dbReference>
<dbReference type="EMBL" id="AL357752">
    <property type="status" value="NOT_ANNOTATED_CDS"/>
    <property type="molecule type" value="Genomic_DNA"/>
</dbReference>
<dbReference type="EMBL" id="BC039181">
    <property type="status" value="NOT_ANNOTATED_CDS"/>
    <property type="molecule type" value="Genomic_DNA"/>
</dbReference>
<dbReference type="EMBL" id="BN000155">
    <property type="protein sequence ID" value="CAD89266.1"/>
    <property type="molecule type" value="mRNA"/>
</dbReference>
<dbReference type="CCDS" id="CCDS35321.1"/>
<dbReference type="RefSeq" id="NP_001013597.1">
    <property type="nucleotide sequence ID" value="NM_001013579.3"/>
</dbReference>
<dbReference type="BioGRID" id="127715">
    <property type="interactions" value="3"/>
</dbReference>
<dbReference type="FunCoup" id="Q58HT5">
    <property type="interactions" value="1"/>
</dbReference>
<dbReference type="STRING" id="9606.ENSP00000363645"/>
<dbReference type="BindingDB" id="Q58HT5"/>
<dbReference type="ChEMBL" id="CHEMBL2375205"/>
<dbReference type="SwissLipids" id="SLP:000000306"/>
<dbReference type="iPTMnet" id="Q58HT5"/>
<dbReference type="BioMuta" id="AWAT1"/>
<dbReference type="DMDM" id="74741070"/>
<dbReference type="PaxDb" id="9606-ENSP00000363645"/>
<dbReference type="Antibodypedia" id="27356">
    <property type="antibodies" value="96 antibodies from 20 providers"/>
</dbReference>
<dbReference type="DNASU" id="158833"/>
<dbReference type="Ensembl" id="ENST00000374521.4">
    <property type="protein sequence ID" value="ENSP00000363645.3"/>
    <property type="gene ID" value="ENSG00000204195.4"/>
</dbReference>
<dbReference type="GeneID" id="158833"/>
<dbReference type="KEGG" id="hsa:158833"/>
<dbReference type="MANE-Select" id="ENST00000374521.4">
    <property type="protein sequence ID" value="ENSP00000363645.3"/>
    <property type="RefSeq nucleotide sequence ID" value="NM_001013579.3"/>
    <property type="RefSeq protein sequence ID" value="NP_001013597.1"/>
</dbReference>
<dbReference type="UCSC" id="uc004dxy.4">
    <property type="organism name" value="human"/>
</dbReference>
<dbReference type="AGR" id="HGNC:23252"/>
<dbReference type="CTD" id="158833"/>
<dbReference type="DisGeNET" id="158833"/>
<dbReference type="GeneCards" id="AWAT1"/>
<dbReference type="HGNC" id="HGNC:23252">
    <property type="gene designation" value="AWAT1"/>
</dbReference>
<dbReference type="HPA" id="ENSG00000204195">
    <property type="expression patterns" value="Tissue enhanced (skin)"/>
</dbReference>
<dbReference type="MIM" id="300924">
    <property type="type" value="gene"/>
</dbReference>
<dbReference type="neXtProt" id="NX_Q58HT5"/>
<dbReference type="OpenTargets" id="ENSG00000204195"/>
<dbReference type="PharmGKB" id="PA164716409"/>
<dbReference type="VEuPathDB" id="HostDB:ENSG00000204195"/>
<dbReference type="eggNOG" id="KOG0831">
    <property type="taxonomic scope" value="Eukaryota"/>
</dbReference>
<dbReference type="GeneTree" id="ENSGT01030000234582"/>
<dbReference type="HOGENOM" id="CLU_023995_0_0_1"/>
<dbReference type="InParanoid" id="Q58HT5"/>
<dbReference type="OMA" id="FYCCVFY"/>
<dbReference type="OrthoDB" id="264532at2759"/>
<dbReference type="PAN-GO" id="Q58HT5">
    <property type="GO annotations" value="3 GO annotations based on evolutionary models"/>
</dbReference>
<dbReference type="PhylomeDB" id="Q58HT5"/>
<dbReference type="TreeFam" id="TF314707"/>
<dbReference type="BRENDA" id="2.3.1.75">
    <property type="organism ID" value="2681"/>
</dbReference>
<dbReference type="PathwayCommons" id="Q58HT5"/>
<dbReference type="Reactome" id="R-HSA-2142753">
    <property type="pathway name" value="Arachidonate metabolism"/>
</dbReference>
<dbReference type="Reactome" id="R-HSA-9640463">
    <property type="pathway name" value="Wax biosynthesis"/>
</dbReference>
<dbReference type="BioGRID-ORCS" id="158833">
    <property type="hits" value="12 hits in 764 CRISPR screens"/>
</dbReference>
<dbReference type="GenomeRNAi" id="158833"/>
<dbReference type="Pharos" id="Q58HT5">
    <property type="development level" value="Tbio"/>
</dbReference>
<dbReference type="PRO" id="PR:Q58HT5"/>
<dbReference type="Proteomes" id="UP000005640">
    <property type="component" value="Chromosome X"/>
</dbReference>
<dbReference type="RNAct" id="Q58HT5">
    <property type="molecule type" value="protein"/>
</dbReference>
<dbReference type="Bgee" id="ENSG00000204195">
    <property type="expression patterns" value="Expressed in upper leg skin and 36 other cell types or tissues"/>
</dbReference>
<dbReference type="GO" id="GO:0005789">
    <property type="term" value="C:endoplasmic reticulum membrane"/>
    <property type="evidence" value="ECO:0000318"/>
    <property type="project" value="GO_Central"/>
</dbReference>
<dbReference type="GO" id="GO:0047196">
    <property type="term" value="F:long-chain-alcohol O-fatty-acyltransferase activity"/>
    <property type="evidence" value="ECO:0000269"/>
    <property type="project" value="Reactome"/>
</dbReference>
<dbReference type="GO" id="GO:0019369">
    <property type="term" value="P:arachidonate metabolic process"/>
    <property type="evidence" value="ECO:0000304"/>
    <property type="project" value="Reactome"/>
</dbReference>
<dbReference type="GO" id="GO:0006629">
    <property type="term" value="P:lipid metabolic process"/>
    <property type="evidence" value="ECO:0000318"/>
    <property type="project" value="GO_Central"/>
</dbReference>
<dbReference type="GO" id="GO:0010025">
    <property type="term" value="P:wax biosynthetic process"/>
    <property type="evidence" value="ECO:0000304"/>
    <property type="project" value="Reactome"/>
</dbReference>
<dbReference type="CDD" id="cd07987">
    <property type="entry name" value="LPLAT_MGAT-like"/>
    <property type="match status" value="1"/>
</dbReference>
<dbReference type="InterPro" id="IPR007130">
    <property type="entry name" value="DAGAT"/>
</dbReference>
<dbReference type="PANTHER" id="PTHR12317:SF16">
    <property type="entry name" value="ACYL-COA WAX ALCOHOL ACYLTRANSFERASE 1"/>
    <property type="match status" value="1"/>
</dbReference>
<dbReference type="PANTHER" id="PTHR12317">
    <property type="entry name" value="DIACYLGLYCEROL O-ACYLTRANSFERASE"/>
    <property type="match status" value="1"/>
</dbReference>
<dbReference type="Pfam" id="PF03982">
    <property type="entry name" value="DAGAT"/>
    <property type="match status" value="1"/>
</dbReference>
<proteinExistence type="evidence at protein level"/>